<keyword id="KW-0158">Chromosome</keyword>
<keyword id="KW-0963">Cytoplasm</keyword>
<keyword id="KW-0227">DNA damage</keyword>
<keyword id="KW-0539">Nucleus</keyword>
<keyword id="KW-0597">Phosphoprotein</keyword>
<keyword id="KW-1185">Reference proteome</keyword>
<name>INT7_BOVIN</name>
<sequence length="962" mass="106771">MASNSTKSFLADAGYGEQELDANSALMELDKGLRSGKLGEQCEAVVRFPRLFQKYPFPILINSAFLKLADVFRVGNNFLRLCVLKVTQQSEKHLEKILNVDEFVKRIFSVIHSNDPVARAITLRMLGSLASIIPERKNAHHSIRQSLDSHDNVEVEAAVFAAANFSAQSKDFAVGICNKISEMIQGLATPVDLKLKLIPILQHMHHDAILASSARQLLQQLVTAYPSTRMVIVSLHTFTLLAASSLVDTPKQIQLLLQYLKNDPRKAVKRLAIQDLKLLANKTPHTWSRENIQALCECALQTPYDSLKLGMLSVLATLSGTIAVKHYFSIASGNVGSSPRSSDLVKLAQECCYHNNRGIAAHGVRVLTNITVSCQEKDLLALEQDAVFGLESLLVLCSQDDSPGAQATLKIALNCMVKLAKGRPHLSQSVVETLLTQLHSAQDTARILMCHCLAAIAMQLPVLGDGMLGDLVELYKVIGRSATDKQQELLVSLATVIFVASQKALSAEVKAVIKQQLESVSNGWTVYRIARQASRMGNHDMARELYQTLLTQVASEHFYFWLNSLKEFSHAEQCLTGLQEENYSSALSCIAESLKFYHKGIASLTAASTPLNPLSFQCEFVKLRIDLLQAFSQLICTCNSLKTSPPPAIATTIAMTLGNDLQRCGRISNQMKLSMEEFRSLASRYGDLYQASFDADSATLRNVELQQQSCLLISHAIEALILDPESASFQEYGSTGAAHADSEYERRMMSVYNHVLEEVESLNRKYTPVSYMHTACLCNAIISLLKVPLSFQRYFFQKLQSTSIKLALSPSPRNPAEPIAVQNNQQLALKVEGVVQHGSKPGLFRRIQSVCLNVSSTLQSKSGQDYKIPIDNMTNEMEQRVEPHNDYFSTQFLLNFAILGTHNITVESSVKDANGIVWKTGPRTTIFVKSLEDPYSQQIRLQQQQAQQPLQQQQQRNAYTRF</sequence>
<gene>
    <name type="primary">INTS7</name>
</gene>
<protein>
    <recommendedName>
        <fullName>Integrator complex subunit 7</fullName>
        <shortName>Int7</shortName>
    </recommendedName>
</protein>
<proteinExistence type="evidence at transcript level"/>
<evidence type="ECO:0000250" key="1">
    <source>
        <dbReference type="UniProtKB" id="Q9NVH2"/>
    </source>
</evidence>
<evidence type="ECO:0000305" key="2"/>
<accession>Q1RMS6</accession>
<dbReference type="EMBL" id="BC114738">
    <property type="protein sequence ID" value="AAI14739.1"/>
    <property type="molecule type" value="mRNA"/>
</dbReference>
<dbReference type="RefSeq" id="NP_001069512.1">
    <property type="nucleotide sequence ID" value="NM_001076044.2"/>
</dbReference>
<dbReference type="SMR" id="Q1RMS6"/>
<dbReference type="FunCoup" id="Q1RMS6">
    <property type="interactions" value="3874"/>
</dbReference>
<dbReference type="STRING" id="9913.ENSBTAP00000024684"/>
<dbReference type="PaxDb" id="9913-ENSBTAP00000024684"/>
<dbReference type="Ensembl" id="ENSBTAT00000024684.6">
    <property type="protein sequence ID" value="ENSBTAP00000024684.5"/>
    <property type="gene ID" value="ENSBTAG00000018548.7"/>
</dbReference>
<dbReference type="GeneID" id="534964"/>
<dbReference type="KEGG" id="bta:534964"/>
<dbReference type="CTD" id="25896"/>
<dbReference type="VEuPathDB" id="HostDB:ENSBTAG00000018548"/>
<dbReference type="VGNC" id="VGNC:30233">
    <property type="gene designation" value="INTS7"/>
</dbReference>
<dbReference type="eggNOG" id="KOG1988">
    <property type="taxonomic scope" value="Eukaryota"/>
</dbReference>
<dbReference type="GeneTree" id="ENSGT00390000011724"/>
<dbReference type="HOGENOM" id="CLU_013157_0_0_1"/>
<dbReference type="InParanoid" id="Q1RMS6"/>
<dbReference type="OMA" id="GITWCTG"/>
<dbReference type="OrthoDB" id="1921953at2759"/>
<dbReference type="TreeFam" id="TF106105"/>
<dbReference type="Reactome" id="R-BTA-6807505">
    <property type="pathway name" value="RNA polymerase II transcribes snRNA genes"/>
</dbReference>
<dbReference type="Proteomes" id="UP000009136">
    <property type="component" value="Chromosome 16"/>
</dbReference>
<dbReference type="Bgee" id="ENSBTAG00000018548">
    <property type="expression patterns" value="Expressed in liver and 112 other cell types or tissues"/>
</dbReference>
<dbReference type="GO" id="GO:0005694">
    <property type="term" value="C:chromosome"/>
    <property type="evidence" value="ECO:0007669"/>
    <property type="project" value="UniProtKB-SubCell"/>
</dbReference>
<dbReference type="GO" id="GO:0005737">
    <property type="term" value="C:cytoplasm"/>
    <property type="evidence" value="ECO:0000250"/>
    <property type="project" value="UniProtKB"/>
</dbReference>
<dbReference type="GO" id="GO:0160232">
    <property type="term" value="C:INTAC complex"/>
    <property type="evidence" value="ECO:0000250"/>
    <property type="project" value="UniProtKB"/>
</dbReference>
<dbReference type="GO" id="GO:0032039">
    <property type="term" value="C:integrator complex"/>
    <property type="evidence" value="ECO:0000250"/>
    <property type="project" value="UniProtKB"/>
</dbReference>
<dbReference type="GO" id="GO:0016604">
    <property type="term" value="C:nuclear body"/>
    <property type="evidence" value="ECO:0007669"/>
    <property type="project" value="Ensembl"/>
</dbReference>
<dbReference type="GO" id="GO:0005634">
    <property type="term" value="C:nucleus"/>
    <property type="evidence" value="ECO:0000250"/>
    <property type="project" value="UniProtKB"/>
</dbReference>
<dbReference type="GO" id="GO:0071479">
    <property type="term" value="P:cellular response to ionizing radiation"/>
    <property type="evidence" value="ECO:0007669"/>
    <property type="project" value="Ensembl"/>
</dbReference>
<dbReference type="GO" id="GO:0000077">
    <property type="term" value="P:DNA damage checkpoint signaling"/>
    <property type="evidence" value="ECO:0007669"/>
    <property type="project" value="Ensembl"/>
</dbReference>
<dbReference type="GO" id="GO:0160240">
    <property type="term" value="P:RNA polymerase II transcription initiation surveillance"/>
    <property type="evidence" value="ECO:0000250"/>
    <property type="project" value="UniProtKB"/>
</dbReference>
<dbReference type="GO" id="GO:0034472">
    <property type="term" value="P:snRNA 3'-end processing"/>
    <property type="evidence" value="ECO:0000318"/>
    <property type="project" value="GO_Central"/>
</dbReference>
<dbReference type="Gene3D" id="1.25.10.10">
    <property type="entry name" value="Leucine-rich Repeat Variant"/>
    <property type="match status" value="1"/>
</dbReference>
<dbReference type="InterPro" id="IPR011989">
    <property type="entry name" value="ARM-like"/>
</dbReference>
<dbReference type="InterPro" id="IPR016024">
    <property type="entry name" value="ARM-type_fold"/>
</dbReference>
<dbReference type="InterPro" id="IPR033060">
    <property type="entry name" value="INTS7"/>
</dbReference>
<dbReference type="InterPro" id="IPR054519">
    <property type="entry name" value="INTS7_C"/>
</dbReference>
<dbReference type="InterPro" id="IPR056517">
    <property type="entry name" value="INTS7_HB"/>
</dbReference>
<dbReference type="InterPro" id="IPR056516">
    <property type="entry name" value="INTS7_N"/>
</dbReference>
<dbReference type="PANTHER" id="PTHR13322">
    <property type="entry name" value="C1ORF73 PROTEIN"/>
    <property type="match status" value="1"/>
</dbReference>
<dbReference type="PANTHER" id="PTHR13322:SF2">
    <property type="entry name" value="INTEGRATOR COMPLEX SUBUNIT 7"/>
    <property type="match status" value="1"/>
</dbReference>
<dbReference type="Pfam" id="PF22965">
    <property type="entry name" value="INTS7_C"/>
    <property type="match status" value="1"/>
</dbReference>
<dbReference type="Pfam" id="PF24437">
    <property type="entry name" value="INTS7_HB"/>
    <property type="match status" value="1"/>
</dbReference>
<dbReference type="Pfam" id="PF24436">
    <property type="entry name" value="INTS7_N"/>
    <property type="match status" value="1"/>
</dbReference>
<dbReference type="SUPFAM" id="SSF48371">
    <property type="entry name" value="ARM repeat"/>
    <property type="match status" value="1"/>
</dbReference>
<comment type="function">
    <text evidence="1">Component of the integrator complex, a multiprotein complex that terminates RNA polymerase II (Pol II) transcription in the promoter-proximal region of genes. The integrator complex provides a quality checkpoint during transcription elongation by driving premature transcription termination of transcripts that are unfavorably configured for transcriptional elongation: the complex terminates transcription by (1) catalyzing dephosphorylation of the C-terminal domain (CTD) of Pol II subunit POLR2A/RPB1 and SUPT5H/SPT5, (2) degrading the exiting nascent RNA transcript via endonuclease activity and (3) promoting the release of Pol II from bound DNA. The integrator complex is also involved in terminating the synthesis of non-coding Pol II transcripts, such as enhancer RNAs (eRNAs), small nuclear RNAs (snRNAs), telomerase RNAs and long non-coding RNAs (lncRNAs). May be not involved in the recruitment of cytoplasmic dynein to the nuclear envelope by different components of the INT complex. Plays a role in DNA damage response (DDR) signaling during the S phase.</text>
</comment>
<comment type="subunit">
    <text evidence="1">Component of the Integrator complex, composed of core subunits INTS1, INTS2, INTS3, INTS4, INTS5, INTS6, INTS7, INTS8, INTS9/RC74, INTS10, INTS11/CPSF3L, INTS12, INTS13, INTS14 and INTS15. The core complex associates with protein phosphatase 2A subunits PPP2CA and PPP2R1A, to form the Integrator-PP2A (INTAC) complex. Interacts with NABP2.</text>
</comment>
<comment type="subcellular location">
    <subcellularLocation>
        <location evidence="1">Nucleus</location>
    </subcellularLocation>
    <subcellularLocation>
        <location evidence="1">Chromosome</location>
    </subcellularLocation>
    <subcellularLocation>
        <location evidence="1">Cytoplasm</location>
    </subcellularLocation>
    <text evidence="1">Localizes to sites of DNA damage in a H2AX-independent manner.</text>
</comment>
<comment type="similarity">
    <text evidence="2">Belongs to the Integrator subunit 7 family.</text>
</comment>
<feature type="chain" id="PRO_0000259548" description="Integrator complex subunit 7">
    <location>
        <begin position="1"/>
        <end position="962"/>
    </location>
</feature>
<feature type="modified residue" description="Phosphoserine" evidence="1">
    <location>
        <position position="338"/>
    </location>
</feature>
<feature type="modified residue" description="Phosphoserine" evidence="1">
    <location>
        <position position="809"/>
    </location>
</feature>
<reference key="1">
    <citation type="submission" date="2006-04" db="EMBL/GenBank/DDBJ databases">
        <authorList>
            <consortium name="NIH - Mammalian Gene Collection (MGC) project"/>
        </authorList>
    </citation>
    <scope>NUCLEOTIDE SEQUENCE [LARGE SCALE MRNA]</scope>
    <source>
        <strain>Hereford</strain>
        <tissue>Uterus</tissue>
    </source>
</reference>
<organism>
    <name type="scientific">Bos taurus</name>
    <name type="common">Bovine</name>
    <dbReference type="NCBI Taxonomy" id="9913"/>
    <lineage>
        <taxon>Eukaryota</taxon>
        <taxon>Metazoa</taxon>
        <taxon>Chordata</taxon>
        <taxon>Craniata</taxon>
        <taxon>Vertebrata</taxon>
        <taxon>Euteleostomi</taxon>
        <taxon>Mammalia</taxon>
        <taxon>Eutheria</taxon>
        <taxon>Laurasiatheria</taxon>
        <taxon>Artiodactyla</taxon>
        <taxon>Ruminantia</taxon>
        <taxon>Pecora</taxon>
        <taxon>Bovidae</taxon>
        <taxon>Bovinae</taxon>
        <taxon>Bos</taxon>
    </lineage>
</organism>